<evidence type="ECO:0000255" key="1">
    <source>
        <dbReference type="HAMAP-Rule" id="MF_01855"/>
    </source>
</evidence>
<feature type="chain" id="PRO_0000364488" description="Fructose-1,6-bisphosphatase class 1">
    <location>
        <begin position="1"/>
        <end position="337"/>
    </location>
</feature>
<feature type="binding site" evidence="1">
    <location>
        <position position="94"/>
    </location>
    <ligand>
        <name>Mg(2+)</name>
        <dbReference type="ChEBI" id="CHEBI:18420"/>
        <label>1</label>
    </ligand>
</feature>
<feature type="binding site" evidence="1">
    <location>
        <position position="116"/>
    </location>
    <ligand>
        <name>Mg(2+)</name>
        <dbReference type="ChEBI" id="CHEBI:18420"/>
        <label>1</label>
    </ligand>
</feature>
<feature type="binding site" evidence="1">
    <location>
        <position position="116"/>
    </location>
    <ligand>
        <name>Mg(2+)</name>
        <dbReference type="ChEBI" id="CHEBI:18420"/>
        <label>2</label>
    </ligand>
</feature>
<feature type="binding site" evidence="1">
    <location>
        <position position="118"/>
    </location>
    <ligand>
        <name>Mg(2+)</name>
        <dbReference type="ChEBI" id="CHEBI:18420"/>
        <label>1</label>
    </ligand>
</feature>
<feature type="binding site" evidence="1">
    <location>
        <begin position="119"/>
        <end position="122"/>
    </location>
    <ligand>
        <name>substrate</name>
    </ligand>
</feature>
<feature type="binding site" evidence="1">
    <location>
        <position position="119"/>
    </location>
    <ligand>
        <name>Mg(2+)</name>
        <dbReference type="ChEBI" id="CHEBI:18420"/>
        <label>2</label>
    </ligand>
</feature>
<feature type="binding site" evidence="1">
    <location>
        <position position="210"/>
    </location>
    <ligand>
        <name>substrate</name>
    </ligand>
</feature>
<feature type="binding site" evidence="1">
    <location>
        <position position="276"/>
    </location>
    <ligand>
        <name>substrate</name>
    </ligand>
</feature>
<feature type="binding site" evidence="1">
    <location>
        <position position="282"/>
    </location>
    <ligand>
        <name>Mg(2+)</name>
        <dbReference type="ChEBI" id="CHEBI:18420"/>
        <label>2</label>
    </ligand>
</feature>
<reference key="1">
    <citation type="submission" date="2008-02" db="EMBL/GenBank/DDBJ databases">
        <title>Complete sequence of chromosome 1 of Burkholderia cenocepacia MC0-3.</title>
        <authorList>
            <person name="Copeland A."/>
            <person name="Lucas S."/>
            <person name="Lapidus A."/>
            <person name="Barry K."/>
            <person name="Bruce D."/>
            <person name="Goodwin L."/>
            <person name="Glavina del Rio T."/>
            <person name="Dalin E."/>
            <person name="Tice H."/>
            <person name="Pitluck S."/>
            <person name="Chain P."/>
            <person name="Malfatti S."/>
            <person name="Shin M."/>
            <person name="Vergez L."/>
            <person name="Schmutz J."/>
            <person name="Larimer F."/>
            <person name="Land M."/>
            <person name="Hauser L."/>
            <person name="Kyrpides N."/>
            <person name="Mikhailova N."/>
            <person name="Tiedje J."/>
            <person name="Richardson P."/>
        </authorList>
    </citation>
    <scope>NUCLEOTIDE SEQUENCE [LARGE SCALE GENOMIC DNA]</scope>
    <source>
        <strain>MC0-3</strain>
    </source>
</reference>
<accession>B1JXN8</accession>
<gene>
    <name evidence="1" type="primary">fbp</name>
    <name type="ordered locus">Bcenmc03_0973</name>
</gene>
<comment type="catalytic activity">
    <reaction evidence="1">
        <text>beta-D-fructose 1,6-bisphosphate + H2O = beta-D-fructose 6-phosphate + phosphate</text>
        <dbReference type="Rhea" id="RHEA:11064"/>
        <dbReference type="ChEBI" id="CHEBI:15377"/>
        <dbReference type="ChEBI" id="CHEBI:32966"/>
        <dbReference type="ChEBI" id="CHEBI:43474"/>
        <dbReference type="ChEBI" id="CHEBI:57634"/>
        <dbReference type="EC" id="3.1.3.11"/>
    </reaction>
</comment>
<comment type="cofactor">
    <cofactor evidence="1">
        <name>Mg(2+)</name>
        <dbReference type="ChEBI" id="CHEBI:18420"/>
    </cofactor>
    <text evidence="1">Binds 2 magnesium ions per subunit.</text>
</comment>
<comment type="pathway">
    <text evidence="1">Carbohydrate biosynthesis; gluconeogenesis.</text>
</comment>
<comment type="subunit">
    <text evidence="1">Homotetramer.</text>
</comment>
<comment type="subcellular location">
    <subcellularLocation>
        <location evidence="1">Cytoplasm</location>
    </subcellularLocation>
</comment>
<comment type="similarity">
    <text evidence="1">Belongs to the FBPase class 1 family.</text>
</comment>
<dbReference type="EC" id="3.1.3.11" evidence="1"/>
<dbReference type="EMBL" id="CP000958">
    <property type="protein sequence ID" value="ACA90150.1"/>
    <property type="molecule type" value="Genomic_DNA"/>
</dbReference>
<dbReference type="RefSeq" id="WP_012328107.1">
    <property type="nucleotide sequence ID" value="NC_010508.1"/>
</dbReference>
<dbReference type="SMR" id="B1JXN8"/>
<dbReference type="GeneID" id="83047766"/>
<dbReference type="KEGG" id="bcm:Bcenmc03_0973"/>
<dbReference type="HOGENOM" id="CLU_039977_0_0_4"/>
<dbReference type="UniPathway" id="UPA00138"/>
<dbReference type="Proteomes" id="UP000002169">
    <property type="component" value="Chromosome 1"/>
</dbReference>
<dbReference type="GO" id="GO:0005829">
    <property type="term" value="C:cytosol"/>
    <property type="evidence" value="ECO:0007669"/>
    <property type="project" value="TreeGrafter"/>
</dbReference>
<dbReference type="GO" id="GO:0042132">
    <property type="term" value="F:fructose 1,6-bisphosphate 1-phosphatase activity"/>
    <property type="evidence" value="ECO:0007669"/>
    <property type="project" value="UniProtKB-UniRule"/>
</dbReference>
<dbReference type="GO" id="GO:0000287">
    <property type="term" value="F:magnesium ion binding"/>
    <property type="evidence" value="ECO:0007669"/>
    <property type="project" value="UniProtKB-UniRule"/>
</dbReference>
<dbReference type="GO" id="GO:0030388">
    <property type="term" value="P:fructose 1,6-bisphosphate metabolic process"/>
    <property type="evidence" value="ECO:0007669"/>
    <property type="project" value="TreeGrafter"/>
</dbReference>
<dbReference type="GO" id="GO:0006002">
    <property type="term" value="P:fructose 6-phosphate metabolic process"/>
    <property type="evidence" value="ECO:0007669"/>
    <property type="project" value="TreeGrafter"/>
</dbReference>
<dbReference type="GO" id="GO:0006000">
    <property type="term" value="P:fructose metabolic process"/>
    <property type="evidence" value="ECO:0007669"/>
    <property type="project" value="TreeGrafter"/>
</dbReference>
<dbReference type="GO" id="GO:0006094">
    <property type="term" value="P:gluconeogenesis"/>
    <property type="evidence" value="ECO:0007669"/>
    <property type="project" value="UniProtKB-UniRule"/>
</dbReference>
<dbReference type="GO" id="GO:0005986">
    <property type="term" value="P:sucrose biosynthetic process"/>
    <property type="evidence" value="ECO:0007669"/>
    <property type="project" value="TreeGrafter"/>
</dbReference>
<dbReference type="CDD" id="cd00354">
    <property type="entry name" value="FBPase"/>
    <property type="match status" value="1"/>
</dbReference>
<dbReference type="FunFam" id="3.30.540.10:FF:000006">
    <property type="entry name" value="Fructose-1,6-bisphosphatase class 1"/>
    <property type="match status" value="1"/>
</dbReference>
<dbReference type="FunFam" id="3.40.190.80:FF:000011">
    <property type="entry name" value="Fructose-1,6-bisphosphatase class 1"/>
    <property type="match status" value="1"/>
</dbReference>
<dbReference type="Gene3D" id="3.40.190.80">
    <property type="match status" value="1"/>
</dbReference>
<dbReference type="Gene3D" id="3.30.540.10">
    <property type="entry name" value="Fructose-1,6-Bisphosphatase, subunit A, domain 1"/>
    <property type="match status" value="1"/>
</dbReference>
<dbReference type="HAMAP" id="MF_01855">
    <property type="entry name" value="FBPase_class1"/>
    <property type="match status" value="1"/>
</dbReference>
<dbReference type="InterPro" id="IPR044015">
    <property type="entry name" value="FBPase_C_dom"/>
</dbReference>
<dbReference type="InterPro" id="IPR000146">
    <property type="entry name" value="FBPase_class-1"/>
</dbReference>
<dbReference type="InterPro" id="IPR033391">
    <property type="entry name" value="FBPase_N"/>
</dbReference>
<dbReference type="InterPro" id="IPR028343">
    <property type="entry name" value="FBPtase"/>
</dbReference>
<dbReference type="NCBIfam" id="NF006778">
    <property type="entry name" value="PRK09293.1-1"/>
    <property type="match status" value="1"/>
</dbReference>
<dbReference type="NCBIfam" id="NF006779">
    <property type="entry name" value="PRK09293.1-3"/>
    <property type="match status" value="1"/>
</dbReference>
<dbReference type="NCBIfam" id="NF006780">
    <property type="entry name" value="PRK09293.1-4"/>
    <property type="match status" value="1"/>
</dbReference>
<dbReference type="PANTHER" id="PTHR11556">
    <property type="entry name" value="FRUCTOSE-1,6-BISPHOSPHATASE-RELATED"/>
    <property type="match status" value="1"/>
</dbReference>
<dbReference type="PANTHER" id="PTHR11556:SF35">
    <property type="entry name" value="SEDOHEPTULOSE-1,7-BISPHOSPHATASE, CHLOROPLASTIC"/>
    <property type="match status" value="1"/>
</dbReference>
<dbReference type="Pfam" id="PF00316">
    <property type="entry name" value="FBPase"/>
    <property type="match status" value="1"/>
</dbReference>
<dbReference type="Pfam" id="PF18913">
    <property type="entry name" value="FBPase_C"/>
    <property type="match status" value="1"/>
</dbReference>
<dbReference type="PIRSF" id="PIRSF500210">
    <property type="entry name" value="FBPtase"/>
    <property type="match status" value="1"/>
</dbReference>
<dbReference type="PIRSF" id="PIRSF000904">
    <property type="entry name" value="FBPtase_SBPase"/>
    <property type="match status" value="1"/>
</dbReference>
<dbReference type="PRINTS" id="PR00115">
    <property type="entry name" value="F16BPHPHTASE"/>
</dbReference>
<dbReference type="SUPFAM" id="SSF56655">
    <property type="entry name" value="Carbohydrate phosphatase"/>
    <property type="match status" value="1"/>
</dbReference>
<protein>
    <recommendedName>
        <fullName evidence="1">Fructose-1,6-bisphosphatase class 1</fullName>
        <shortName evidence="1">FBPase class 1</shortName>
        <ecNumber evidence="1">3.1.3.11</ecNumber>
    </recommendedName>
    <alternativeName>
        <fullName evidence="1">D-fructose-1,6-bisphosphate 1-phosphohydrolase class 1</fullName>
    </alternativeName>
</protein>
<proteinExistence type="inferred from homology"/>
<sequence>MSIARRTTLSKFLIEQQRETNNLPADLRLLIEVVARACKAISYNVSKGALGDALGTAGSENVQGEVQKKLDILSNEILLDANEWGGNLAAMASEEMETFFPIPANYPRGEYLLVFDPLDGSSNIDVNVSIGTIFSVLRCPDGKQATEESFLQPGTEQVAAGYAVYGPQTVFVLTTGNGVNCFTLDREVGSWVLTQSNMQIPADTREYAINASNARHWYDPVKRYVDELNAGKDGPRGDNFNMRWIASMVADVHRILNRGGIFMYPADKRTPDRPGKLRLMYEANPMSFIVEQAGGAATTGTQRIMEVQPTGLHQRVPVFLGSKNEVERVTGYHDEAK</sequence>
<keyword id="KW-0119">Carbohydrate metabolism</keyword>
<keyword id="KW-0963">Cytoplasm</keyword>
<keyword id="KW-0378">Hydrolase</keyword>
<keyword id="KW-0460">Magnesium</keyword>
<keyword id="KW-0479">Metal-binding</keyword>
<organism>
    <name type="scientific">Burkholderia orbicola (strain MC0-3)</name>
    <dbReference type="NCBI Taxonomy" id="406425"/>
    <lineage>
        <taxon>Bacteria</taxon>
        <taxon>Pseudomonadati</taxon>
        <taxon>Pseudomonadota</taxon>
        <taxon>Betaproteobacteria</taxon>
        <taxon>Burkholderiales</taxon>
        <taxon>Burkholderiaceae</taxon>
        <taxon>Burkholderia</taxon>
        <taxon>Burkholderia cepacia complex</taxon>
        <taxon>Burkholderia orbicola</taxon>
    </lineage>
</organism>
<name>F16PA_BURO0</name>